<keyword id="KW-0539">Nucleus</keyword>
<keyword id="KW-1185">Reference proteome</keyword>
<keyword id="KW-0677">Repeat</keyword>
<keyword id="KW-0853">WD repeat</keyword>
<gene>
    <name type="primary">JIP5</name>
    <name type="ORF">MGL_1921</name>
</gene>
<feature type="chain" id="PRO_0000333564" description="WD repeat-containing protein JIP5">
    <location>
        <begin position="1"/>
        <end position="419"/>
    </location>
</feature>
<feature type="repeat" description="WD 1">
    <location>
        <begin position="4"/>
        <end position="45"/>
    </location>
</feature>
<feature type="repeat" description="WD 2">
    <location>
        <begin position="66"/>
        <end position="105"/>
    </location>
</feature>
<feature type="repeat" description="WD 3">
    <location>
        <begin position="108"/>
        <end position="147"/>
    </location>
</feature>
<feature type="repeat" description="WD 4">
    <location>
        <begin position="180"/>
        <end position="220"/>
    </location>
</feature>
<feature type="repeat" description="WD 5">
    <location>
        <begin position="224"/>
        <end position="263"/>
    </location>
</feature>
<feature type="repeat" description="WD 6">
    <location>
        <begin position="268"/>
        <end position="308"/>
    </location>
</feature>
<feature type="repeat" description="WD 7">
    <location>
        <begin position="351"/>
        <end position="390"/>
    </location>
</feature>
<feature type="region of interest" description="Disordered" evidence="2">
    <location>
        <begin position="172"/>
        <end position="192"/>
    </location>
</feature>
<feature type="region of interest" description="Disordered" evidence="2">
    <location>
        <begin position="372"/>
        <end position="408"/>
    </location>
</feature>
<feature type="compositionally biased region" description="Basic residues" evidence="2">
    <location>
        <begin position="392"/>
        <end position="404"/>
    </location>
</feature>
<reference key="1">
    <citation type="journal article" date="2007" name="Proc. Natl. Acad. Sci. U.S.A.">
        <title>Dandruff-associated Malassezia genomes reveal convergent and divergent virulence traits shared with plant and human fungal pathogens.</title>
        <authorList>
            <person name="Xu J."/>
            <person name="Saunders C.W."/>
            <person name="Hu P."/>
            <person name="Grant R.A."/>
            <person name="Boekhout T."/>
            <person name="Kuramae E.E."/>
            <person name="Kronstad J.W."/>
            <person name="DeAngelis Y.M."/>
            <person name="Reeder N.L."/>
            <person name="Johnstone K.R."/>
            <person name="Leland M."/>
            <person name="Fieno A.M."/>
            <person name="Begley W.M."/>
            <person name="Sun Y."/>
            <person name="Lacey M.P."/>
            <person name="Chaudhary T."/>
            <person name="Keough T."/>
            <person name="Chu L."/>
            <person name="Sears R."/>
            <person name="Yuan B."/>
            <person name="Dawson T.L. Jr."/>
        </authorList>
    </citation>
    <scope>NUCLEOTIDE SEQUENCE [LARGE SCALE GENOMIC DNA]</scope>
    <source>
        <strain>ATCC MYA-4612 / CBS 7966</strain>
    </source>
</reference>
<protein>
    <recommendedName>
        <fullName>WD repeat-containing protein JIP5</fullName>
    </recommendedName>
</protein>
<accession>A8PZI1</accession>
<name>JIP5_MALGO</name>
<evidence type="ECO:0000250" key="1"/>
<evidence type="ECO:0000256" key="2">
    <source>
        <dbReference type="SAM" id="MobiDB-lite"/>
    </source>
</evidence>
<evidence type="ECO:0000305" key="3"/>
<proteinExistence type="inferred from homology"/>
<organism>
    <name type="scientific">Malassezia globosa (strain ATCC MYA-4612 / CBS 7966)</name>
    <name type="common">Dandruff-associated fungus</name>
    <dbReference type="NCBI Taxonomy" id="425265"/>
    <lineage>
        <taxon>Eukaryota</taxon>
        <taxon>Fungi</taxon>
        <taxon>Dikarya</taxon>
        <taxon>Basidiomycota</taxon>
        <taxon>Ustilaginomycotina</taxon>
        <taxon>Malasseziomycetes</taxon>
        <taxon>Malasseziales</taxon>
        <taxon>Malasseziaceae</taxon>
        <taxon>Malassezia</taxon>
    </lineage>
</organism>
<comment type="subcellular location">
    <subcellularLocation>
        <location evidence="1">Nucleus</location>
        <location evidence="1">Nucleolus</location>
    </subcellularLocation>
</comment>
<comment type="similarity">
    <text evidence="3">Belongs to the WD repeat WDR55 family.</text>
</comment>
<dbReference type="EMBL" id="AAYY01000006">
    <property type="protein sequence ID" value="EDP43708.1"/>
    <property type="molecule type" value="Genomic_DNA"/>
</dbReference>
<dbReference type="RefSeq" id="XP_001730922.1">
    <property type="nucleotide sequence ID" value="XM_001730870.1"/>
</dbReference>
<dbReference type="SMR" id="A8PZI1"/>
<dbReference type="FunCoup" id="A8PZI1">
    <property type="interactions" value="417"/>
</dbReference>
<dbReference type="STRING" id="425265.A8PZI1"/>
<dbReference type="GeneID" id="5855229"/>
<dbReference type="KEGG" id="mgl:MGL_1921"/>
<dbReference type="VEuPathDB" id="FungiDB:MGL_1921"/>
<dbReference type="InParanoid" id="A8PZI1"/>
<dbReference type="OMA" id="QAIHPTE"/>
<dbReference type="OrthoDB" id="2288928at2759"/>
<dbReference type="Proteomes" id="UP000008837">
    <property type="component" value="Unassembled WGS sequence"/>
</dbReference>
<dbReference type="GO" id="GO:0005730">
    <property type="term" value="C:nucleolus"/>
    <property type="evidence" value="ECO:0007669"/>
    <property type="project" value="UniProtKB-SubCell"/>
</dbReference>
<dbReference type="Gene3D" id="2.130.10.10">
    <property type="entry name" value="YVTN repeat-like/Quinoprotein amine dehydrogenase"/>
    <property type="match status" value="2"/>
</dbReference>
<dbReference type="InterPro" id="IPR015943">
    <property type="entry name" value="WD40/YVTN_repeat-like_dom_sf"/>
</dbReference>
<dbReference type="InterPro" id="IPR036322">
    <property type="entry name" value="WD40_repeat_dom_sf"/>
</dbReference>
<dbReference type="InterPro" id="IPR001680">
    <property type="entry name" value="WD40_rpt"/>
</dbReference>
<dbReference type="InterPro" id="IPR050505">
    <property type="entry name" value="WDR55_POC1"/>
</dbReference>
<dbReference type="PANTHER" id="PTHR44019">
    <property type="entry name" value="WD REPEAT-CONTAINING PROTEIN 55"/>
    <property type="match status" value="1"/>
</dbReference>
<dbReference type="PANTHER" id="PTHR44019:SF20">
    <property type="entry name" value="WD REPEAT-CONTAINING PROTEIN 55"/>
    <property type="match status" value="1"/>
</dbReference>
<dbReference type="Pfam" id="PF00400">
    <property type="entry name" value="WD40"/>
    <property type="match status" value="2"/>
</dbReference>
<dbReference type="SMART" id="SM00320">
    <property type="entry name" value="WD40"/>
    <property type="match status" value="6"/>
</dbReference>
<dbReference type="SUPFAM" id="SSF50978">
    <property type="entry name" value="WD40 repeat-like"/>
    <property type="match status" value="1"/>
</dbReference>
<sequence length="419" mass="45645">MDIALSSDALDVSFHPDEGVHQIAVGLISGKVQLFDYGAMFHNQSTQPDESRTSGKAYRRVWSVRPSHKSCRGVAFDASGSNLFCIFKDKSIIALDPSDGHVKARWPRAHESAPSRILPIHEGLMATGDDDGIVRLWDPRCPPEGDAEAKPLRSYDHHSDWITDMLWCTHLDPPRSKKKDQEDDLKRKRDEERARSRLIVTSGDGTLSVIDIHGGKKGVEVSEDQEDELLSIASIKNGKKLVVGTQLGVLSLWAPDRGLLDHADRFPGHPSSVDALCTLDQDTVLTGSSDGLIRVVQLFPHKLLGIVGDHGGMPIECMKRKGHLIASIGHGNECKLTDLAPLLEEGDVETDAAEPEPAVMLVSDEAHLIARSADGSDESAGESDVMQPPPATKRRTAKSKAGKKSVHDVDQHASFFADL</sequence>